<sequence>MSRYTGPSWKQSRRLGLSLTGTGKELARRNYVPGQHGPNNRSKLSEYGLQLAEKQKLRFSYGLGEKQFRNLFVQATKIKEGTLGFNFMVLLERRLDNVVYRLGLATTRRQARQFVNHGHILVDGKRVDIPSYRVDPGQVISVREKSMKVPAILEAVEATLGRPAFVSFDAEKLEGSLTRLPERDEINPEINEALVVEFYNKML</sequence>
<accession>Q1JJE2</accession>
<name>RS4_STRPC</name>
<organism>
    <name type="scientific">Streptococcus pyogenes serotype M12 (strain MGAS9429)</name>
    <dbReference type="NCBI Taxonomy" id="370551"/>
    <lineage>
        <taxon>Bacteria</taxon>
        <taxon>Bacillati</taxon>
        <taxon>Bacillota</taxon>
        <taxon>Bacilli</taxon>
        <taxon>Lactobacillales</taxon>
        <taxon>Streptococcaceae</taxon>
        <taxon>Streptococcus</taxon>
    </lineage>
</organism>
<evidence type="ECO:0000255" key="1">
    <source>
        <dbReference type="HAMAP-Rule" id="MF_01306"/>
    </source>
</evidence>
<evidence type="ECO:0000305" key="2"/>
<keyword id="KW-0687">Ribonucleoprotein</keyword>
<keyword id="KW-0689">Ribosomal protein</keyword>
<keyword id="KW-0694">RNA-binding</keyword>
<keyword id="KW-0699">rRNA-binding</keyword>
<gene>
    <name evidence="1" type="primary">rpsD</name>
    <name type="ordered locus">MGAS9429_Spy1844</name>
</gene>
<dbReference type="EMBL" id="CP000259">
    <property type="protein sequence ID" value="ABF33031.1"/>
    <property type="molecule type" value="Genomic_DNA"/>
</dbReference>
<dbReference type="RefSeq" id="WP_002982092.1">
    <property type="nucleotide sequence ID" value="NC_008021.1"/>
</dbReference>
<dbReference type="SMR" id="Q1JJE2"/>
<dbReference type="GeneID" id="69901600"/>
<dbReference type="KEGG" id="spk:MGAS9429_Spy1844"/>
<dbReference type="HOGENOM" id="CLU_092403_0_1_9"/>
<dbReference type="Proteomes" id="UP000002433">
    <property type="component" value="Chromosome"/>
</dbReference>
<dbReference type="GO" id="GO:0015935">
    <property type="term" value="C:small ribosomal subunit"/>
    <property type="evidence" value="ECO:0007669"/>
    <property type="project" value="InterPro"/>
</dbReference>
<dbReference type="GO" id="GO:0019843">
    <property type="term" value="F:rRNA binding"/>
    <property type="evidence" value="ECO:0007669"/>
    <property type="project" value="UniProtKB-UniRule"/>
</dbReference>
<dbReference type="GO" id="GO:0003735">
    <property type="term" value="F:structural constituent of ribosome"/>
    <property type="evidence" value="ECO:0007669"/>
    <property type="project" value="InterPro"/>
</dbReference>
<dbReference type="GO" id="GO:0042274">
    <property type="term" value="P:ribosomal small subunit biogenesis"/>
    <property type="evidence" value="ECO:0007669"/>
    <property type="project" value="TreeGrafter"/>
</dbReference>
<dbReference type="GO" id="GO:0006412">
    <property type="term" value="P:translation"/>
    <property type="evidence" value="ECO:0007669"/>
    <property type="project" value="UniProtKB-UniRule"/>
</dbReference>
<dbReference type="CDD" id="cd00165">
    <property type="entry name" value="S4"/>
    <property type="match status" value="1"/>
</dbReference>
<dbReference type="FunFam" id="1.10.1050.10:FF:000001">
    <property type="entry name" value="30S ribosomal protein S4"/>
    <property type="match status" value="1"/>
</dbReference>
<dbReference type="FunFam" id="3.10.290.10:FF:000001">
    <property type="entry name" value="30S ribosomal protein S4"/>
    <property type="match status" value="1"/>
</dbReference>
<dbReference type="Gene3D" id="1.10.1050.10">
    <property type="entry name" value="Ribosomal Protein S4 Delta 41, Chain A, domain 1"/>
    <property type="match status" value="1"/>
</dbReference>
<dbReference type="Gene3D" id="3.10.290.10">
    <property type="entry name" value="RNA-binding S4 domain"/>
    <property type="match status" value="1"/>
</dbReference>
<dbReference type="HAMAP" id="MF_01306_B">
    <property type="entry name" value="Ribosomal_uS4_B"/>
    <property type="match status" value="1"/>
</dbReference>
<dbReference type="InterPro" id="IPR022801">
    <property type="entry name" value="Ribosomal_uS4"/>
</dbReference>
<dbReference type="InterPro" id="IPR005709">
    <property type="entry name" value="Ribosomal_uS4_bac-type"/>
</dbReference>
<dbReference type="InterPro" id="IPR018079">
    <property type="entry name" value="Ribosomal_uS4_CS"/>
</dbReference>
<dbReference type="InterPro" id="IPR001912">
    <property type="entry name" value="Ribosomal_uS4_N"/>
</dbReference>
<dbReference type="InterPro" id="IPR002942">
    <property type="entry name" value="S4_RNA-bd"/>
</dbReference>
<dbReference type="InterPro" id="IPR036986">
    <property type="entry name" value="S4_RNA-bd_sf"/>
</dbReference>
<dbReference type="NCBIfam" id="NF003717">
    <property type="entry name" value="PRK05327.1"/>
    <property type="match status" value="1"/>
</dbReference>
<dbReference type="NCBIfam" id="TIGR01017">
    <property type="entry name" value="rpsD_bact"/>
    <property type="match status" value="1"/>
</dbReference>
<dbReference type="PANTHER" id="PTHR11831">
    <property type="entry name" value="30S 40S RIBOSOMAL PROTEIN"/>
    <property type="match status" value="1"/>
</dbReference>
<dbReference type="PANTHER" id="PTHR11831:SF4">
    <property type="entry name" value="SMALL RIBOSOMAL SUBUNIT PROTEIN US4M"/>
    <property type="match status" value="1"/>
</dbReference>
<dbReference type="Pfam" id="PF00163">
    <property type="entry name" value="Ribosomal_S4"/>
    <property type="match status" value="1"/>
</dbReference>
<dbReference type="Pfam" id="PF01479">
    <property type="entry name" value="S4"/>
    <property type="match status" value="1"/>
</dbReference>
<dbReference type="SMART" id="SM01390">
    <property type="entry name" value="Ribosomal_S4"/>
    <property type="match status" value="1"/>
</dbReference>
<dbReference type="SMART" id="SM00363">
    <property type="entry name" value="S4"/>
    <property type="match status" value="1"/>
</dbReference>
<dbReference type="SUPFAM" id="SSF55174">
    <property type="entry name" value="Alpha-L RNA-binding motif"/>
    <property type="match status" value="1"/>
</dbReference>
<dbReference type="PROSITE" id="PS00632">
    <property type="entry name" value="RIBOSOMAL_S4"/>
    <property type="match status" value="1"/>
</dbReference>
<dbReference type="PROSITE" id="PS50889">
    <property type="entry name" value="S4"/>
    <property type="match status" value="1"/>
</dbReference>
<comment type="function">
    <text evidence="1">One of the primary rRNA binding proteins, it binds directly to 16S rRNA where it nucleates assembly of the body of the 30S subunit.</text>
</comment>
<comment type="function">
    <text evidence="1">With S5 and S12 plays an important role in translational accuracy.</text>
</comment>
<comment type="subunit">
    <text evidence="1">Part of the 30S ribosomal subunit. Contacts protein S5. The interaction surface between S4 and S5 is involved in control of translational fidelity.</text>
</comment>
<comment type="similarity">
    <text evidence="1">Belongs to the universal ribosomal protein uS4 family.</text>
</comment>
<protein>
    <recommendedName>
        <fullName evidence="1">Small ribosomal subunit protein uS4</fullName>
    </recommendedName>
    <alternativeName>
        <fullName evidence="2">30S ribosomal protein S4</fullName>
    </alternativeName>
</protein>
<proteinExistence type="inferred from homology"/>
<reference key="1">
    <citation type="journal article" date="2006" name="Proc. Natl. Acad. Sci. U.S.A.">
        <title>Molecular genetic anatomy of inter- and intraserotype variation in the human bacterial pathogen group A Streptococcus.</title>
        <authorList>
            <person name="Beres S.B."/>
            <person name="Richter E.W."/>
            <person name="Nagiec M.J."/>
            <person name="Sumby P."/>
            <person name="Porcella S.F."/>
            <person name="DeLeo F.R."/>
            <person name="Musser J.M."/>
        </authorList>
    </citation>
    <scope>NUCLEOTIDE SEQUENCE [LARGE SCALE GENOMIC DNA]</scope>
    <source>
        <strain>MGAS9429</strain>
    </source>
</reference>
<feature type="chain" id="PRO_0000293379" description="Small ribosomal subunit protein uS4">
    <location>
        <begin position="1"/>
        <end position="203"/>
    </location>
</feature>
<feature type="domain" description="S4 RNA-binding" evidence="1">
    <location>
        <begin position="93"/>
        <end position="156"/>
    </location>
</feature>